<evidence type="ECO:0000255" key="1">
    <source>
        <dbReference type="HAMAP-Rule" id="MF_01690"/>
    </source>
</evidence>
<comment type="function">
    <text evidence="1">Catalyzes the hydrolysis of N-succinyl-L,L-diaminopimelic acid (SDAP), forming succinate and LL-2,6-diaminopimelate (DAP), an intermediate involved in the bacterial biosynthesis of lysine and meso-diaminopimelic acid, an essential component of bacterial cell walls.</text>
</comment>
<comment type="catalytic activity">
    <reaction evidence="1">
        <text>N-succinyl-(2S,6S)-2,6-diaminopimelate + H2O = (2S,6S)-2,6-diaminopimelate + succinate</text>
        <dbReference type="Rhea" id="RHEA:22608"/>
        <dbReference type="ChEBI" id="CHEBI:15377"/>
        <dbReference type="ChEBI" id="CHEBI:30031"/>
        <dbReference type="ChEBI" id="CHEBI:57609"/>
        <dbReference type="ChEBI" id="CHEBI:58087"/>
        <dbReference type="EC" id="3.5.1.18"/>
    </reaction>
</comment>
<comment type="cofactor">
    <cofactor evidence="1">
        <name>Zn(2+)</name>
        <dbReference type="ChEBI" id="CHEBI:29105"/>
    </cofactor>
    <cofactor evidence="1">
        <name>Co(2+)</name>
        <dbReference type="ChEBI" id="CHEBI:48828"/>
    </cofactor>
    <text evidence="1">Binds 2 Zn(2+) or Co(2+) ions per subunit.</text>
</comment>
<comment type="pathway">
    <text evidence="1">Amino-acid biosynthesis; L-lysine biosynthesis via DAP pathway; LL-2,6-diaminopimelate from (S)-tetrahydrodipicolinate (succinylase route): step 3/3.</text>
</comment>
<comment type="subunit">
    <text evidence="1">Homodimer.</text>
</comment>
<comment type="similarity">
    <text evidence="1">Belongs to the peptidase M20A family. DapE subfamily.</text>
</comment>
<sequence>MTASAVLDLVKDLIARPSVTPDDVDCQMLLAQRLERIGFQCETIARGGVTNLWARRGAGAPLTVFAGHTDVVPPGPRDKWDSDPFVPTERDGFLYGRGAADMKSSIAAFVVAAEEFVAAHPEHPGSIALLITSDEEGPAVDGTVIVCDELRQRGEQLDYCIVGEPTSTEALGDVCKNGRRGSLSGRLLVKGVQGHVAYPHLARNPVHQLAPALTELVAIEWDQGNEYFPPTTFQVSNLHAGTGATNVVPGEAVALFNFRFSTASTPDQLKARVHEVLDRHGLEYQLDWELGGEPFLTPRGSLTDALVSAIQAETGLQAELSTTGGTSDGRFIARICPQVIEFGPCNATIHKVNERIELSSLAPLKNIYRRTLENLLLAD</sequence>
<proteinExistence type="inferred from homology"/>
<protein>
    <recommendedName>
        <fullName evidence="1">Succinyl-diaminopimelate desuccinylase</fullName>
        <shortName evidence="1">SDAP desuccinylase</shortName>
        <ecNumber evidence="1">3.5.1.18</ecNumber>
    </recommendedName>
    <alternativeName>
        <fullName evidence="1">N-succinyl-LL-2,6-diaminoheptanedioate amidohydrolase</fullName>
    </alternativeName>
</protein>
<gene>
    <name evidence="1" type="primary">dapE</name>
    <name type="ordered locus">BPP1994</name>
</gene>
<dbReference type="EC" id="3.5.1.18" evidence="1"/>
<dbReference type="EMBL" id="BX640429">
    <property type="protein sequence ID" value="CAE37294.1"/>
    <property type="molecule type" value="Genomic_DNA"/>
</dbReference>
<dbReference type="RefSeq" id="WP_010928311.1">
    <property type="nucleotide sequence ID" value="NC_002928.3"/>
</dbReference>
<dbReference type="SMR" id="Q7W8Y3"/>
<dbReference type="GeneID" id="93203767"/>
<dbReference type="KEGG" id="bpa:BPP1994"/>
<dbReference type="HOGENOM" id="CLU_021802_4_0_4"/>
<dbReference type="UniPathway" id="UPA00034">
    <property type="reaction ID" value="UER00021"/>
</dbReference>
<dbReference type="Proteomes" id="UP000001421">
    <property type="component" value="Chromosome"/>
</dbReference>
<dbReference type="GO" id="GO:0008777">
    <property type="term" value="F:acetylornithine deacetylase activity"/>
    <property type="evidence" value="ECO:0007669"/>
    <property type="project" value="TreeGrafter"/>
</dbReference>
<dbReference type="GO" id="GO:0050897">
    <property type="term" value="F:cobalt ion binding"/>
    <property type="evidence" value="ECO:0007669"/>
    <property type="project" value="UniProtKB-UniRule"/>
</dbReference>
<dbReference type="GO" id="GO:0009014">
    <property type="term" value="F:succinyl-diaminopimelate desuccinylase activity"/>
    <property type="evidence" value="ECO:0007669"/>
    <property type="project" value="UniProtKB-UniRule"/>
</dbReference>
<dbReference type="GO" id="GO:0008270">
    <property type="term" value="F:zinc ion binding"/>
    <property type="evidence" value="ECO:0007669"/>
    <property type="project" value="UniProtKB-UniRule"/>
</dbReference>
<dbReference type="GO" id="GO:0019877">
    <property type="term" value="P:diaminopimelate biosynthetic process"/>
    <property type="evidence" value="ECO:0007669"/>
    <property type="project" value="UniProtKB-UniRule"/>
</dbReference>
<dbReference type="GO" id="GO:0006526">
    <property type="term" value="P:L-arginine biosynthetic process"/>
    <property type="evidence" value="ECO:0007669"/>
    <property type="project" value="TreeGrafter"/>
</dbReference>
<dbReference type="GO" id="GO:0009089">
    <property type="term" value="P:lysine biosynthetic process via diaminopimelate"/>
    <property type="evidence" value="ECO:0007669"/>
    <property type="project" value="UniProtKB-UniRule"/>
</dbReference>
<dbReference type="CDD" id="cd03891">
    <property type="entry name" value="M20_DapE_proteobac"/>
    <property type="match status" value="1"/>
</dbReference>
<dbReference type="FunFam" id="3.30.70.360:FF:000011">
    <property type="entry name" value="Succinyl-diaminopimelate desuccinylase"/>
    <property type="match status" value="1"/>
</dbReference>
<dbReference type="FunFam" id="3.40.630.10:FF:000005">
    <property type="entry name" value="Succinyl-diaminopimelate desuccinylase"/>
    <property type="match status" value="1"/>
</dbReference>
<dbReference type="Gene3D" id="1.10.150.900">
    <property type="match status" value="1"/>
</dbReference>
<dbReference type="Gene3D" id="3.30.70.360">
    <property type="match status" value="1"/>
</dbReference>
<dbReference type="Gene3D" id="3.40.630.10">
    <property type="entry name" value="Zn peptidases"/>
    <property type="match status" value="1"/>
</dbReference>
<dbReference type="HAMAP" id="MF_01690">
    <property type="entry name" value="DapE"/>
    <property type="match status" value="1"/>
</dbReference>
<dbReference type="InterPro" id="IPR036264">
    <property type="entry name" value="Bact_exopeptidase_dim_dom"/>
</dbReference>
<dbReference type="InterPro" id="IPR005941">
    <property type="entry name" value="DapE_proteobac"/>
</dbReference>
<dbReference type="InterPro" id="IPR002933">
    <property type="entry name" value="Peptidase_M20"/>
</dbReference>
<dbReference type="InterPro" id="IPR011650">
    <property type="entry name" value="Peptidase_M20_dimer"/>
</dbReference>
<dbReference type="InterPro" id="IPR050072">
    <property type="entry name" value="Peptidase_M20A"/>
</dbReference>
<dbReference type="NCBIfam" id="TIGR01246">
    <property type="entry name" value="dapE_proteo"/>
    <property type="match status" value="1"/>
</dbReference>
<dbReference type="NCBIfam" id="NF009557">
    <property type="entry name" value="PRK13009.1"/>
    <property type="match status" value="1"/>
</dbReference>
<dbReference type="PANTHER" id="PTHR43808">
    <property type="entry name" value="ACETYLORNITHINE DEACETYLASE"/>
    <property type="match status" value="1"/>
</dbReference>
<dbReference type="PANTHER" id="PTHR43808:SF31">
    <property type="entry name" value="N-ACETYL-L-CITRULLINE DEACETYLASE"/>
    <property type="match status" value="1"/>
</dbReference>
<dbReference type="Pfam" id="PF07687">
    <property type="entry name" value="M20_dimer"/>
    <property type="match status" value="1"/>
</dbReference>
<dbReference type="Pfam" id="PF01546">
    <property type="entry name" value="Peptidase_M20"/>
    <property type="match status" value="1"/>
</dbReference>
<dbReference type="SUPFAM" id="SSF55031">
    <property type="entry name" value="Bacterial exopeptidase dimerisation domain"/>
    <property type="match status" value="1"/>
</dbReference>
<dbReference type="SUPFAM" id="SSF53187">
    <property type="entry name" value="Zn-dependent exopeptidases"/>
    <property type="match status" value="1"/>
</dbReference>
<dbReference type="PROSITE" id="PS00759">
    <property type="entry name" value="ARGE_DAPE_CPG2_2"/>
    <property type="match status" value="1"/>
</dbReference>
<reference key="1">
    <citation type="journal article" date="2003" name="Nat. Genet.">
        <title>Comparative analysis of the genome sequences of Bordetella pertussis, Bordetella parapertussis and Bordetella bronchiseptica.</title>
        <authorList>
            <person name="Parkhill J."/>
            <person name="Sebaihia M."/>
            <person name="Preston A."/>
            <person name="Murphy L.D."/>
            <person name="Thomson N.R."/>
            <person name="Harris D.E."/>
            <person name="Holden M.T.G."/>
            <person name="Churcher C.M."/>
            <person name="Bentley S.D."/>
            <person name="Mungall K.L."/>
            <person name="Cerdeno-Tarraga A.-M."/>
            <person name="Temple L."/>
            <person name="James K.D."/>
            <person name="Harris B."/>
            <person name="Quail M.A."/>
            <person name="Achtman M."/>
            <person name="Atkin R."/>
            <person name="Baker S."/>
            <person name="Basham D."/>
            <person name="Bason N."/>
            <person name="Cherevach I."/>
            <person name="Chillingworth T."/>
            <person name="Collins M."/>
            <person name="Cronin A."/>
            <person name="Davis P."/>
            <person name="Doggett J."/>
            <person name="Feltwell T."/>
            <person name="Goble A."/>
            <person name="Hamlin N."/>
            <person name="Hauser H."/>
            <person name="Holroyd S."/>
            <person name="Jagels K."/>
            <person name="Leather S."/>
            <person name="Moule S."/>
            <person name="Norberczak H."/>
            <person name="O'Neil S."/>
            <person name="Ormond D."/>
            <person name="Price C."/>
            <person name="Rabbinowitsch E."/>
            <person name="Rutter S."/>
            <person name="Sanders M."/>
            <person name="Saunders D."/>
            <person name="Seeger K."/>
            <person name="Sharp S."/>
            <person name="Simmonds M."/>
            <person name="Skelton J."/>
            <person name="Squares R."/>
            <person name="Squares S."/>
            <person name="Stevens K."/>
            <person name="Unwin L."/>
            <person name="Whitehead S."/>
            <person name="Barrell B.G."/>
            <person name="Maskell D.J."/>
        </authorList>
    </citation>
    <scope>NUCLEOTIDE SEQUENCE [LARGE SCALE GENOMIC DNA]</scope>
    <source>
        <strain>12822 / ATCC BAA-587 / NCTC 13253</strain>
    </source>
</reference>
<keyword id="KW-0028">Amino-acid biosynthesis</keyword>
<keyword id="KW-0170">Cobalt</keyword>
<keyword id="KW-0220">Diaminopimelate biosynthesis</keyword>
<keyword id="KW-0378">Hydrolase</keyword>
<keyword id="KW-0457">Lysine biosynthesis</keyword>
<keyword id="KW-0479">Metal-binding</keyword>
<keyword id="KW-0862">Zinc</keyword>
<organism>
    <name type="scientific">Bordetella parapertussis (strain 12822 / ATCC BAA-587 / NCTC 13253)</name>
    <dbReference type="NCBI Taxonomy" id="257311"/>
    <lineage>
        <taxon>Bacteria</taxon>
        <taxon>Pseudomonadati</taxon>
        <taxon>Pseudomonadota</taxon>
        <taxon>Betaproteobacteria</taxon>
        <taxon>Burkholderiales</taxon>
        <taxon>Alcaligenaceae</taxon>
        <taxon>Bordetella</taxon>
    </lineage>
</organism>
<name>DAPE_BORPA</name>
<feature type="chain" id="PRO_0000375478" description="Succinyl-diaminopimelate desuccinylase">
    <location>
        <begin position="1"/>
        <end position="379"/>
    </location>
</feature>
<feature type="active site" evidence="1">
    <location>
        <position position="70"/>
    </location>
</feature>
<feature type="active site" description="Proton acceptor" evidence="1">
    <location>
        <position position="135"/>
    </location>
</feature>
<feature type="binding site" evidence="1">
    <location>
        <position position="68"/>
    </location>
    <ligand>
        <name>Zn(2+)</name>
        <dbReference type="ChEBI" id="CHEBI:29105"/>
        <label>1</label>
    </ligand>
</feature>
<feature type="binding site" evidence="1">
    <location>
        <position position="101"/>
    </location>
    <ligand>
        <name>Zn(2+)</name>
        <dbReference type="ChEBI" id="CHEBI:29105"/>
        <label>1</label>
    </ligand>
</feature>
<feature type="binding site" evidence="1">
    <location>
        <position position="101"/>
    </location>
    <ligand>
        <name>Zn(2+)</name>
        <dbReference type="ChEBI" id="CHEBI:29105"/>
        <label>2</label>
    </ligand>
</feature>
<feature type="binding site" evidence="1">
    <location>
        <position position="136"/>
    </location>
    <ligand>
        <name>Zn(2+)</name>
        <dbReference type="ChEBI" id="CHEBI:29105"/>
        <label>2</label>
    </ligand>
</feature>
<feature type="binding site" evidence="1">
    <location>
        <position position="164"/>
    </location>
    <ligand>
        <name>Zn(2+)</name>
        <dbReference type="ChEBI" id="CHEBI:29105"/>
        <label>1</label>
    </ligand>
</feature>
<feature type="binding site" evidence="1">
    <location>
        <position position="350"/>
    </location>
    <ligand>
        <name>Zn(2+)</name>
        <dbReference type="ChEBI" id="CHEBI:29105"/>
        <label>2</label>
    </ligand>
</feature>
<accession>Q7W8Y3</accession>